<accession>Q9JJN0</accession>
<accession>Q9JJJ2</accession>
<gene>
    <name type="primary">Polh</name>
    <name type="synonym">Rad30a</name>
    <name type="synonym">Xpv</name>
</gene>
<organism>
    <name type="scientific">Mus musculus</name>
    <name type="common">Mouse</name>
    <dbReference type="NCBI Taxonomy" id="10090"/>
    <lineage>
        <taxon>Eukaryota</taxon>
        <taxon>Metazoa</taxon>
        <taxon>Chordata</taxon>
        <taxon>Craniata</taxon>
        <taxon>Vertebrata</taxon>
        <taxon>Euteleostomi</taxon>
        <taxon>Mammalia</taxon>
        <taxon>Eutheria</taxon>
        <taxon>Euarchontoglires</taxon>
        <taxon>Glires</taxon>
        <taxon>Rodentia</taxon>
        <taxon>Myomorpha</taxon>
        <taxon>Muroidea</taxon>
        <taxon>Muridae</taxon>
        <taxon>Murinae</taxon>
        <taxon>Mus</taxon>
        <taxon>Mus</taxon>
    </lineage>
</organism>
<dbReference type="EC" id="2.7.7.7" evidence="1"/>
<dbReference type="EMBL" id="AB027128">
    <property type="protein sequence ID" value="BAA97570.1"/>
    <property type="molecule type" value="mRNA"/>
</dbReference>
<dbReference type="EMBL" id="AB037184">
    <property type="protein sequence ID" value="BAA97585.1"/>
    <property type="molecule type" value="mRNA"/>
</dbReference>
<dbReference type="EMBL" id="AK036296">
    <property type="protein sequence ID" value="BAC29375.1"/>
    <property type="molecule type" value="mRNA"/>
</dbReference>
<dbReference type="CCDS" id="CCDS28822.1"/>
<dbReference type="RefSeq" id="NP_109640.1">
    <property type="nucleotide sequence ID" value="NM_030715.4"/>
</dbReference>
<dbReference type="SMR" id="Q9JJN0"/>
<dbReference type="BioGRID" id="219842">
    <property type="interactions" value="8"/>
</dbReference>
<dbReference type="FunCoup" id="Q9JJN0">
    <property type="interactions" value="3283"/>
</dbReference>
<dbReference type="IntAct" id="Q9JJN0">
    <property type="interactions" value="1"/>
</dbReference>
<dbReference type="STRING" id="10090.ENSMUSP00000024749"/>
<dbReference type="iPTMnet" id="Q9JJN0"/>
<dbReference type="PhosphoSitePlus" id="Q9JJN0"/>
<dbReference type="jPOST" id="Q9JJN0"/>
<dbReference type="PaxDb" id="10090-ENSMUSP00000024749"/>
<dbReference type="ProteomicsDB" id="289780"/>
<dbReference type="Pumba" id="Q9JJN0"/>
<dbReference type="Antibodypedia" id="1879">
    <property type="antibodies" value="210 antibodies from 31 providers"/>
</dbReference>
<dbReference type="DNASU" id="80905"/>
<dbReference type="Ensembl" id="ENSMUST00000024749.9">
    <property type="protein sequence ID" value="ENSMUSP00000024749.8"/>
    <property type="gene ID" value="ENSMUSG00000023953.10"/>
</dbReference>
<dbReference type="GeneID" id="80905"/>
<dbReference type="KEGG" id="mmu:80905"/>
<dbReference type="UCSC" id="uc008crx.1">
    <property type="organism name" value="mouse"/>
</dbReference>
<dbReference type="AGR" id="MGI:1891457"/>
<dbReference type="CTD" id="5429"/>
<dbReference type="MGI" id="MGI:1891457">
    <property type="gene designation" value="Polh"/>
</dbReference>
<dbReference type="VEuPathDB" id="HostDB:ENSMUSG00000023953"/>
<dbReference type="eggNOG" id="KOG2095">
    <property type="taxonomic scope" value="Eukaryota"/>
</dbReference>
<dbReference type="GeneTree" id="ENSGT00940000157048"/>
<dbReference type="HOGENOM" id="CLU_012348_7_2_1"/>
<dbReference type="InParanoid" id="Q9JJN0"/>
<dbReference type="OMA" id="QNHRVAK"/>
<dbReference type="OrthoDB" id="5723at2759"/>
<dbReference type="PhylomeDB" id="Q9JJN0"/>
<dbReference type="TreeFam" id="TF103010"/>
<dbReference type="Reactome" id="R-MMU-110320">
    <property type="pathway name" value="Translesion Synthesis by POLH"/>
</dbReference>
<dbReference type="Reactome" id="R-MMU-5656169">
    <property type="pathway name" value="Termination of translesion DNA synthesis"/>
</dbReference>
<dbReference type="Reactome" id="R-MMU-5685942">
    <property type="pathway name" value="HDR through Homologous Recombination (HRR)"/>
</dbReference>
<dbReference type="BioGRID-ORCS" id="80905">
    <property type="hits" value="5 hits in 112 CRISPR screens"/>
</dbReference>
<dbReference type="ChiTaRS" id="Polh">
    <property type="organism name" value="mouse"/>
</dbReference>
<dbReference type="PRO" id="PR:Q9JJN0"/>
<dbReference type="Proteomes" id="UP000000589">
    <property type="component" value="Chromosome 17"/>
</dbReference>
<dbReference type="RNAct" id="Q9JJN0">
    <property type="molecule type" value="protein"/>
</dbReference>
<dbReference type="Bgee" id="ENSMUSG00000023953">
    <property type="expression patterns" value="Expressed in endothelial cell of lymphatic vessel and 221 other cell types or tissues"/>
</dbReference>
<dbReference type="ExpressionAtlas" id="Q9JJN0">
    <property type="expression patterns" value="baseline and differential"/>
</dbReference>
<dbReference type="GO" id="GO:0005829">
    <property type="term" value="C:cytosol"/>
    <property type="evidence" value="ECO:0007669"/>
    <property type="project" value="Ensembl"/>
</dbReference>
<dbReference type="GO" id="GO:0005654">
    <property type="term" value="C:nucleoplasm"/>
    <property type="evidence" value="ECO:0007669"/>
    <property type="project" value="Ensembl"/>
</dbReference>
<dbReference type="GO" id="GO:0003684">
    <property type="term" value="F:damaged DNA binding"/>
    <property type="evidence" value="ECO:0007669"/>
    <property type="project" value="InterPro"/>
</dbReference>
<dbReference type="GO" id="GO:0003887">
    <property type="term" value="F:DNA-directed DNA polymerase activity"/>
    <property type="evidence" value="ECO:0000314"/>
    <property type="project" value="MGI"/>
</dbReference>
<dbReference type="GO" id="GO:0008270">
    <property type="term" value="F:zinc ion binding"/>
    <property type="evidence" value="ECO:0007669"/>
    <property type="project" value="UniProtKB-KW"/>
</dbReference>
<dbReference type="GO" id="GO:0071494">
    <property type="term" value="P:cellular response to UV-C"/>
    <property type="evidence" value="ECO:0000315"/>
    <property type="project" value="MGI"/>
</dbReference>
<dbReference type="GO" id="GO:0006260">
    <property type="term" value="P:DNA replication"/>
    <property type="evidence" value="ECO:0007669"/>
    <property type="project" value="UniProtKB-KW"/>
</dbReference>
<dbReference type="GO" id="GO:0000731">
    <property type="term" value="P:DNA synthesis involved in DNA repair"/>
    <property type="evidence" value="ECO:0007669"/>
    <property type="project" value="Ensembl"/>
</dbReference>
<dbReference type="GO" id="GO:0006301">
    <property type="term" value="P:postreplication repair"/>
    <property type="evidence" value="ECO:0000314"/>
    <property type="project" value="MGI"/>
</dbReference>
<dbReference type="GO" id="GO:0006290">
    <property type="term" value="P:pyrimidine dimer repair"/>
    <property type="evidence" value="ECO:0000314"/>
    <property type="project" value="MGI"/>
</dbReference>
<dbReference type="CDD" id="cd01702">
    <property type="entry name" value="PolY_Pol_eta"/>
    <property type="match status" value="1"/>
</dbReference>
<dbReference type="FunFam" id="3.30.1490.100:FF:000007">
    <property type="entry name" value="DNA polymerase eta"/>
    <property type="match status" value="1"/>
</dbReference>
<dbReference type="FunFam" id="3.30.70.270:FF:000022">
    <property type="entry name" value="DNA polymerase eta"/>
    <property type="match status" value="1"/>
</dbReference>
<dbReference type="FunFam" id="3.40.1170.60:FF:000003">
    <property type="entry name" value="DNA polymerase eta"/>
    <property type="match status" value="1"/>
</dbReference>
<dbReference type="FunFam" id="1.10.150.20:FF:000014">
    <property type="entry name" value="Polymerase (DNA directed), eta"/>
    <property type="match status" value="1"/>
</dbReference>
<dbReference type="Gene3D" id="3.30.70.270">
    <property type="match status" value="2"/>
</dbReference>
<dbReference type="Gene3D" id="3.40.1170.60">
    <property type="match status" value="1"/>
</dbReference>
<dbReference type="Gene3D" id="1.10.150.20">
    <property type="entry name" value="5' to 3' exonuclease, C-terminal subdomain"/>
    <property type="match status" value="1"/>
</dbReference>
<dbReference type="Gene3D" id="3.30.1490.100">
    <property type="entry name" value="DNA polymerase, Y-family, little finger domain"/>
    <property type="match status" value="1"/>
</dbReference>
<dbReference type="InterPro" id="IPR043502">
    <property type="entry name" value="DNA/RNA_pol_sf"/>
</dbReference>
<dbReference type="InterPro" id="IPR036775">
    <property type="entry name" value="DNA_pol_Y-fam_lit_finger_sf"/>
</dbReference>
<dbReference type="InterPro" id="IPR017961">
    <property type="entry name" value="DNA_pol_Y-fam_little_finger"/>
</dbReference>
<dbReference type="InterPro" id="IPR052230">
    <property type="entry name" value="DNA_polymerase_eta"/>
</dbReference>
<dbReference type="InterPro" id="IPR043128">
    <property type="entry name" value="Rev_trsase/Diguanyl_cyclase"/>
</dbReference>
<dbReference type="InterPro" id="IPR041298">
    <property type="entry name" value="UBZ3"/>
</dbReference>
<dbReference type="InterPro" id="IPR001126">
    <property type="entry name" value="UmuC"/>
</dbReference>
<dbReference type="PANTHER" id="PTHR45873">
    <property type="entry name" value="DNA POLYMERASE ETA"/>
    <property type="match status" value="1"/>
</dbReference>
<dbReference type="PANTHER" id="PTHR45873:SF1">
    <property type="entry name" value="DNA POLYMERASE ETA"/>
    <property type="match status" value="1"/>
</dbReference>
<dbReference type="Pfam" id="PF00817">
    <property type="entry name" value="IMS"/>
    <property type="match status" value="1"/>
</dbReference>
<dbReference type="Pfam" id="PF11799">
    <property type="entry name" value="IMS_C"/>
    <property type="match status" value="1"/>
</dbReference>
<dbReference type="Pfam" id="PF21704">
    <property type="entry name" value="POLH-Rev1_HhH"/>
    <property type="match status" value="1"/>
</dbReference>
<dbReference type="Pfam" id="PF18439">
    <property type="entry name" value="zf_UBZ"/>
    <property type="match status" value="1"/>
</dbReference>
<dbReference type="PIRSF" id="PIRSF036603">
    <property type="entry name" value="DPol_eta"/>
    <property type="match status" value="1"/>
</dbReference>
<dbReference type="SUPFAM" id="SSF56672">
    <property type="entry name" value="DNA/RNA polymerases"/>
    <property type="match status" value="1"/>
</dbReference>
<dbReference type="SUPFAM" id="SSF100879">
    <property type="entry name" value="Lesion bypass DNA polymerase (Y-family), little finger domain"/>
    <property type="match status" value="1"/>
</dbReference>
<dbReference type="PROSITE" id="PS50173">
    <property type="entry name" value="UMUC"/>
    <property type="match status" value="1"/>
</dbReference>
<dbReference type="PROSITE" id="PS51907">
    <property type="entry name" value="ZF_UBZ3"/>
    <property type="match status" value="1"/>
</dbReference>
<feature type="chain" id="PRO_0000173987" description="DNA polymerase eta">
    <location>
        <begin position="1"/>
        <end position="694"/>
    </location>
</feature>
<feature type="domain" description="UmuC" evidence="2">
    <location>
        <begin position="9"/>
        <end position="258"/>
    </location>
</feature>
<feature type="zinc finger region" description="UBZ3-type" evidence="3">
    <location>
        <begin position="609"/>
        <end position="643"/>
    </location>
</feature>
<feature type="region of interest" description="Disordered" evidence="4">
    <location>
        <begin position="565"/>
        <end position="598"/>
    </location>
</feature>
<feature type="region of interest" description="Disordered" evidence="4">
    <location>
        <begin position="651"/>
        <end position="694"/>
    </location>
</feature>
<feature type="short sequence motif" description="PIP-box" evidence="1">
    <location>
        <begin position="682"/>
        <end position="689"/>
    </location>
</feature>
<feature type="active site" evidence="2">
    <location>
        <position position="116"/>
    </location>
</feature>
<feature type="binding site" evidence="1">
    <location>
        <position position="13"/>
    </location>
    <ligand>
        <name>Mg(2+)</name>
        <dbReference type="ChEBI" id="CHEBI:18420"/>
        <label>1</label>
    </ligand>
</feature>
<feature type="binding site" evidence="1">
    <location>
        <position position="13"/>
    </location>
    <ligand>
        <name>Mg(2+)</name>
        <dbReference type="ChEBI" id="CHEBI:18420"/>
        <label>2</label>
    </ligand>
</feature>
<feature type="binding site" evidence="1">
    <location>
        <position position="13"/>
    </location>
    <ligand>
        <name>Mn(2+)</name>
        <dbReference type="ChEBI" id="CHEBI:29035"/>
        <label>1</label>
    </ligand>
</feature>
<feature type="binding site" evidence="1">
    <location>
        <position position="13"/>
    </location>
    <ligand>
        <name>Mn(2+)</name>
        <dbReference type="ChEBI" id="CHEBI:29035"/>
        <label>2</label>
    </ligand>
</feature>
<feature type="binding site" evidence="1">
    <location>
        <position position="14"/>
    </location>
    <ligand>
        <name>Mg(2+)</name>
        <dbReference type="ChEBI" id="CHEBI:18420"/>
        <label>1</label>
    </ligand>
</feature>
<feature type="binding site" evidence="1">
    <location>
        <position position="14"/>
    </location>
    <ligand>
        <name>Mn(2+)</name>
        <dbReference type="ChEBI" id="CHEBI:29035"/>
        <label>1</label>
    </ligand>
</feature>
<feature type="binding site" evidence="1">
    <location>
        <position position="61"/>
    </location>
    <ligand>
        <name>a 2'-deoxyribonucleoside 5'-triphosphate</name>
        <dbReference type="ChEBI" id="CHEBI:61560"/>
    </ligand>
</feature>
<feature type="binding site" evidence="1">
    <location>
        <position position="115"/>
    </location>
    <ligand>
        <name>Mg(2+)</name>
        <dbReference type="ChEBI" id="CHEBI:18420"/>
        <label>1</label>
    </ligand>
</feature>
<feature type="binding site" evidence="1">
    <location>
        <position position="115"/>
    </location>
    <ligand>
        <name>Mg(2+)</name>
        <dbReference type="ChEBI" id="CHEBI:18420"/>
        <label>2</label>
    </ligand>
</feature>
<feature type="binding site" evidence="1">
    <location>
        <position position="115"/>
    </location>
    <ligand>
        <name>Mn(2+)</name>
        <dbReference type="ChEBI" id="CHEBI:29035"/>
        <label>1</label>
    </ligand>
</feature>
<feature type="binding site" evidence="1">
    <location>
        <position position="115"/>
    </location>
    <ligand>
        <name>Mn(2+)</name>
        <dbReference type="ChEBI" id="CHEBI:29035"/>
        <label>2</label>
    </ligand>
</feature>
<feature type="binding site" evidence="1">
    <location>
        <position position="116"/>
    </location>
    <ligand>
        <name>Mg(2+)</name>
        <dbReference type="ChEBI" id="CHEBI:18420"/>
        <label>2</label>
    </ligand>
</feature>
<feature type="binding site" evidence="1">
    <location>
        <position position="116"/>
    </location>
    <ligand>
        <name>Mn(2+)</name>
        <dbReference type="ChEBI" id="CHEBI:29035"/>
        <label>2</label>
    </ligand>
</feature>
<feature type="binding site" evidence="3">
    <location>
        <position position="616"/>
    </location>
    <ligand>
        <name>Zn(2+)</name>
        <dbReference type="ChEBI" id="CHEBI:29105"/>
    </ligand>
</feature>
<feature type="binding site" evidence="3">
    <location>
        <position position="619"/>
    </location>
    <ligand>
        <name>Zn(2+)</name>
        <dbReference type="ChEBI" id="CHEBI:29105"/>
    </ligand>
</feature>
<feature type="binding site" evidence="3">
    <location>
        <position position="631"/>
    </location>
    <ligand>
        <name>Zn(2+)</name>
        <dbReference type="ChEBI" id="CHEBI:29105"/>
    </ligand>
</feature>
<feature type="binding site" evidence="3">
    <location>
        <position position="635"/>
    </location>
    <ligand>
        <name>Zn(2+)</name>
        <dbReference type="ChEBI" id="CHEBI:29105"/>
    </ligand>
</feature>
<feature type="cross-link" description="Glycyl lysine isopeptide (Lys-Gly) (interchain with G-Cter in ubiquitin)" evidence="1">
    <location>
        <position position="663"/>
    </location>
</feature>
<feature type="cross-link" description="Glycyl lysine isopeptide (Lys-Gly) (interchain with G-Cter in ubiquitin)" evidence="1">
    <location>
        <position position="667"/>
    </location>
</feature>
<feature type="cross-link" description="Glycyl lysine isopeptide (Lys-Gly) (interchain with G-Cter in ubiquitin)" evidence="1">
    <location>
        <position position="675"/>
    </location>
</feature>
<feature type="cross-link" description="Glycyl lysine isopeptide (Lys-Gly) (interchain with G-Cter in ubiquitin)" evidence="1">
    <location>
        <position position="690"/>
    </location>
</feature>
<name>POLH_MOUSE</name>
<keyword id="KW-0227">DNA damage</keyword>
<keyword id="KW-0234">DNA repair</keyword>
<keyword id="KW-0235">DNA replication</keyword>
<keyword id="KW-0237">DNA synthesis</keyword>
<keyword id="KW-0238">DNA-binding</keyword>
<keyword id="KW-0239">DNA-directed DNA polymerase</keyword>
<keyword id="KW-1017">Isopeptide bond</keyword>
<keyword id="KW-0460">Magnesium</keyword>
<keyword id="KW-0464">Manganese</keyword>
<keyword id="KW-0479">Metal-binding</keyword>
<keyword id="KW-0515">Mutator protein</keyword>
<keyword id="KW-0548">Nucleotidyltransferase</keyword>
<keyword id="KW-0539">Nucleus</keyword>
<keyword id="KW-1185">Reference proteome</keyword>
<keyword id="KW-0704">Schiff base</keyword>
<keyword id="KW-0808">Transferase</keyword>
<keyword id="KW-0832">Ubl conjugation</keyword>
<keyword id="KW-0862">Zinc</keyword>
<keyword id="KW-0863">Zinc-finger</keyword>
<sequence length="694" mass="76167">MAPGQNRVVALVDMDCFFVQVEQRQNPHLRNKPCAVVQYKSWKGGGIIAVSYEARAFGVTRNMWADDAKKLCPDLLLAQVRESRGKANLTKYREASVEVMEIMSYFAVIERASIDEAYIDLTSAVQERLQKLQGQPISADLLPSTYIEGLPRGPTVEETVQKEAIRKQGLLQWLDSLQSDDPTSPDLRLTVGAMIVEEMRAAIESKTGFQCSAGISHNKVLAKLACGLNKPNRQTLVSHGSVPQLFSQMPIRKIRSLGGKLGASVIEVLGIEYMGDLTQFTESQLQSHFGEKNGSWLYAMCRGIEHDPVKPRQLPKTIGCSKNFPGKTALATREQVQWWLLQLALELEERLTKDRNDNDRVATQLVVSIRFQGDRRLSSLRRCCALPRYDAHKMSQDAFAAIRNCNTSGIQTEWSPPLTMLFLCATKFSAAAPPACTDITAFLSSDSSCQPKVPIASSETRTQGSGPAVPTSKEAATSLASFFQKAAKKQRMKETSFVPLNTATEKLSSKPSLVFQSSQTTGSQSFFKQKSLLLQHTQLSNSAAPDPPQASPAAQPSCLPAECVDSGPDDGAVKPVSSKAVSTEMNVAGDSPNVLDSPAYNSQEVTQRATEDQVLCEKCDSLVPVWDMPEHTDYHFALELQKSFLQPCTSKPQAIPAVSPQGKRNPKSPSASSSKRLRPHGMQTLESFFKPLTH</sequence>
<protein>
    <recommendedName>
        <fullName>DNA polymerase eta</fullName>
        <ecNumber evidence="1">2.7.7.7</ecNumber>
    </recommendedName>
    <alternativeName>
        <fullName>RAD30 homolog A</fullName>
    </alternativeName>
    <alternativeName>
        <fullName>Xeroderma pigmentosum variant type protein homolog</fullName>
    </alternativeName>
</protein>
<reference key="1">
    <citation type="journal article" date="2000" name="Nucleic Acids Res.">
        <title>Complementation of defective translesion synthesis and UV light-sensitivity in xeroderma pigmentosum variant cells by human and mouse DNA polymerase eta.</title>
        <authorList>
            <person name="Yamada A."/>
            <person name="Masutani C."/>
            <person name="Iwai S."/>
            <person name="Hanaoka F."/>
        </authorList>
    </citation>
    <scope>NUCLEOTIDE SEQUENCE [MRNA]</scope>
    <scope>FUNCTION</scope>
    <scope>INDUCTION</scope>
    <scope>TISSUE SPECIFICITY</scope>
    <source>
        <strain>129/Sv</strain>
        <tissue>Embryo</tissue>
    </source>
</reference>
<reference key="2">
    <citation type="journal article" date="2005" name="Science">
        <title>The transcriptional landscape of the mammalian genome.</title>
        <authorList>
            <person name="Carninci P."/>
            <person name="Kasukawa T."/>
            <person name="Katayama S."/>
            <person name="Gough J."/>
            <person name="Frith M.C."/>
            <person name="Maeda N."/>
            <person name="Oyama R."/>
            <person name="Ravasi T."/>
            <person name="Lenhard B."/>
            <person name="Wells C."/>
            <person name="Kodzius R."/>
            <person name="Shimokawa K."/>
            <person name="Bajic V.B."/>
            <person name="Brenner S.E."/>
            <person name="Batalov S."/>
            <person name="Forrest A.R."/>
            <person name="Zavolan M."/>
            <person name="Davis M.J."/>
            <person name="Wilming L.G."/>
            <person name="Aidinis V."/>
            <person name="Allen J.E."/>
            <person name="Ambesi-Impiombato A."/>
            <person name="Apweiler R."/>
            <person name="Aturaliya R.N."/>
            <person name="Bailey T.L."/>
            <person name="Bansal M."/>
            <person name="Baxter L."/>
            <person name="Beisel K.W."/>
            <person name="Bersano T."/>
            <person name="Bono H."/>
            <person name="Chalk A.M."/>
            <person name="Chiu K.P."/>
            <person name="Choudhary V."/>
            <person name="Christoffels A."/>
            <person name="Clutterbuck D.R."/>
            <person name="Crowe M.L."/>
            <person name="Dalla E."/>
            <person name="Dalrymple B.P."/>
            <person name="de Bono B."/>
            <person name="Della Gatta G."/>
            <person name="di Bernardo D."/>
            <person name="Down T."/>
            <person name="Engstrom P."/>
            <person name="Fagiolini M."/>
            <person name="Faulkner G."/>
            <person name="Fletcher C.F."/>
            <person name="Fukushima T."/>
            <person name="Furuno M."/>
            <person name="Futaki S."/>
            <person name="Gariboldi M."/>
            <person name="Georgii-Hemming P."/>
            <person name="Gingeras T.R."/>
            <person name="Gojobori T."/>
            <person name="Green R.E."/>
            <person name="Gustincich S."/>
            <person name="Harbers M."/>
            <person name="Hayashi Y."/>
            <person name="Hensch T.K."/>
            <person name="Hirokawa N."/>
            <person name="Hill D."/>
            <person name="Huminiecki L."/>
            <person name="Iacono M."/>
            <person name="Ikeo K."/>
            <person name="Iwama A."/>
            <person name="Ishikawa T."/>
            <person name="Jakt M."/>
            <person name="Kanapin A."/>
            <person name="Katoh M."/>
            <person name="Kawasawa Y."/>
            <person name="Kelso J."/>
            <person name="Kitamura H."/>
            <person name="Kitano H."/>
            <person name="Kollias G."/>
            <person name="Krishnan S.P."/>
            <person name="Kruger A."/>
            <person name="Kummerfeld S.K."/>
            <person name="Kurochkin I.V."/>
            <person name="Lareau L.F."/>
            <person name="Lazarevic D."/>
            <person name="Lipovich L."/>
            <person name="Liu J."/>
            <person name="Liuni S."/>
            <person name="McWilliam S."/>
            <person name="Madan Babu M."/>
            <person name="Madera M."/>
            <person name="Marchionni L."/>
            <person name="Matsuda H."/>
            <person name="Matsuzawa S."/>
            <person name="Miki H."/>
            <person name="Mignone F."/>
            <person name="Miyake S."/>
            <person name="Morris K."/>
            <person name="Mottagui-Tabar S."/>
            <person name="Mulder N."/>
            <person name="Nakano N."/>
            <person name="Nakauchi H."/>
            <person name="Ng P."/>
            <person name="Nilsson R."/>
            <person name="Nishiguchi S."/>
            <person name="Nishikawa S."/>
            <person name="Nori F."/>
            <person name="Ohara O."/>
            <person name="Okazaki Y."/>
            <person name="Orlando V."/>
            <person name="Pang K.C."/>
            <person name="Pavan W.J."/>
            <person name="Pavesi G."/>
            <person name="Pesole G."/>
            <person name="Petrovsky N."/>
            <person name="Piazza S."/>
            <person name="Reed J."/>
            <person name="Reid J.F."/>
            <person name="Ring B.Z."/>
            <person name="Ringwald M."/>
            <person name="Rost B."/>
            <person name="Ruan Y."/>
            <person name="Salzberg S.L."/>
            <person name="Sandelin A."/>
            <person name="Schneider C."/>
            <person name="Schoenbach C."/>
            <person name="Sekiguchi K."/>
            <person name="Semple C.A."/>
            <person name="Seno S."/>
            <person name="Sessa L."/>
            <person name="Sheng Y."/>
            <person name="Shibata Y."/>
            <person name="Shimada H."/>
            <person name="Shimada K."/>
            <person name="Silva D."/>
            <person name="Sinclair B."/>
            <person name="Sperling S."/>
            <person name="Stupka E."/>
            <person name="Sugiura K."/>
            <person name="Sultana R."/>
            <person name="Takenaka Y."/>
            <person name="Taki K."/>
            <person name="Tammoja K."/>
            <person name="Tan S.L."/>
            <person name="Tang S."/>
            <person name="Taylor M.S."/>
            <person name="Tegner J."/>
            <person name="Teichmann S.A."/>
            <person name="Ueda H.R."/>
            <person name="van Nimwegen E."/>
            <person name="Verardo R."/>
            <person name="Wei C.L."/>
            <person name="Yagi K."/>
            <person name="Yamanishi H."/>
            <person name="Zabarovsky E."/>
            <person name="Zhu S."/>
            <person name="Zimmer A."/>
            <person name="Hide W."/>
            <person name="Bult C."/>
            <person name="Grimmond S.M."/>
            <person name="Teasdale R.D."/>
            <person name="Liu E.T."/>
            <person name="Brusic V."/>
            <person name="Quackenbush J."/>
            <person name="Wahlestedt C."/>
            <person name="Mattick J.S."/>
            <person name="Hume D.A."/>
            <person name="Kai C."/>
            <person name="Sasaki D."/>
            <person name="Tomaru Y."/>
            <person name="Fukuda S."/>
            <person name="Kanamori-Katayama M."/>
            <person name="Suzuki M."/>
            <person name="Aoki J."/>
            <person name="Arakawa T."/>
            <person name="Iida J."/>
            <person name="Imamura K."/>
            <person name="Itoh M."/>
            <person name="Kato T."/>
            <person name="Kawaji H."/>
            <person name="Kawagashira N."/>
            <person name="Kawashima T."/>
            <person name="Kojima M."/>
            <person name="Kondo S."/>
            <person name="Konno H."/>
            <person name="Nakano K."/>
            <person name="Ninomiya N."/>
            <person name="Nishio T."/>
            <person name="Okada M."/>
            <person name="Plessy C."/>
            <person name="Shibata K."/>
            <person name="Shiraki T."/>
            <person name="Suzuki S."/>
            <person name="Tagami M."/>
            <person name="Waki K."/>
            <person name="Watahiki A."/>
            <person name="Okamura-Oho Y."/>
            <person name="Suzuki H."/>
            <person name="Kawai J."/>
            <person name="Hayashizaki Y."/>
        </authorList>
    </citation>
    <scope>NUCLEOTIDE SEQUENCE [LARGE SCALE MRNA]</scope>
    <source>
        <strain>C57BL/6J</strain>
        <tissue>Cerebellum</tissue>
    </source>
</reference>
<reference key="3">
    <citation type="journal article" date="2003" name="EMBO J.">
        <title>Mouse Rev1 protein interacts with multiple DNA polymerases involved in translesion DNA synthesis.</title>
        <authorList>
            <person name="Guo C."/>
            <person name="Fischhaber P.L."/>
            <person name="Luk-Paszyc M.J."/>
            <person name="Masuda Y."/>
            <person name="Zhou J."/>
            <person name="Kamiya K."/>
            <person name="Kisker C."/>
            <person name="Friedberg E.C."/>
        </authorList>
    </citation>
    <scope>INTERACTION WITH REV1</scope>
</reference>
<comment type="function">
    <text evidence="1 5">DNA polymerase specifically involved in the DNA repair by translesion synthesis (TLS) (PubMed:10871396). Due to low processivity on both damaged and normal DNA, cooperates with the heterotetrameric (REV3L, REV7, POLD2 and POLD3) POLZ complex for complete bypass of DNA lesions. Inserts one or 2 nucleotide(s) opposite the lesion, the primer is further extended by the tetrameric POLZ complex. In the case of 1,2-intrastrand d(GpG)-cisplatin cross-link, inserts dCTP opposite the 3' guanine (By similarity). Particularly important for the repair of UV-induced pyrimidine dimers (PubMed:10871396). Although inserts the correct base, may cause base transitions and transversions depending upon the context. May play a role in hypermutation at immunoglobulin genes. Forms a Schiff base with 5'-deoxyribose phosphate at abasic sites, but does not have any lyase activity, preventing the release of the 5'-deoxyribose phosphate (5'-dRP) residue. This covalent trapping of the enzyme by the 5'-dRP residue inhibits its DNA synthetic activity during base excision repair, thereby avoiding high incidence of mutagenesis. Targets POLI to replication foci (By similarity).</text>
</comment>
<comment type="catalytic activity">
    <reaction evidence="1">
        <text>DNA(n) + a 2'-deoxyribonucleoside 5'-triphosphate = DNA(n+1) + diphosphate</text>
        <dbReference type="Rhea" id="RHEA:22508"/>
        <dbReference type="Rhea" id="RHEA-COMP:17339"/>
        <dbReference type="Rhea" id="RHEA-COMP:17340"/>
        <dbReference type="ChEBI" id="CHEBI:33019"/>
        <dbReference type="ChEBI" id="CHEBI:61560"/>
        <dbReference type="ChEBI" id="CHEBI:173112"/>
        <dbReference type="EC" id="2.7.7.7"/>
    </reaction>
</comment>
<comment type="cofactor">
    <cofactor evidence="1">
        <name>Mg(2+)</name>
        <dbReference type="ChEBI" id="CHEBI:18420"/>
    </cofactor>
    <cofactor evidence="1">
        <name>Mn(2+)</name>
        <dbReference type="ChEBI" id="CHEBI:29035"/>
    </cofactor>
    <text evidence="1">Binds 2 Mg(2+). Prefers Mg(2+), but can also use Mn(2+). In vitro, can also utilize other divalent cations such as Ca(2+).</text>
</comment>
<comment type="activity regulation">
    <text evidence="1">The enzyme in complex with the DNA substrate binds a third divalent metal cation. The binding of this third divalent cation, which is coordinated by water molecules and two oxygen atoms from DNA and dNTP, is essential for catalyzing the DNA synthesis.</text>
</comment>
<comment type="subunit">
    <text evidence="1 6">Interacts with REV1 (PubMed:14657033). Interacts with monoubiquitinated PCNA, but not unmodified PCNA (By similarity). Interacts with POLI; this interaction targets POLI to the replication machinery (By similarity). Interacts with PALB2 and BRCA2; the interactions are direct and are required to sustain the recruitment of POLH at blocked replication forks and to stimulate POLH-dependent DNA synthesis on D loop substrates (By similarity). Interacts (via C-terminus) with TRAIP. Interacts with ubiquitin (By similarity). Interacts with POLDIP2.</text>
</comment>
<comment type="subcellular location">
    <subcellularLocation>
        <location evidence="1">Nucleus</location>
    </subcellularLocation>
    <text evidence="1">Binding to ubiquitinated PCNA mediates colocalization to replication foci during DNA replication and persists at sites of stalled replication forks following UV irradiation. After UV irradiation, recruited to DNA damage sites within 1 hour, to a maximum of about 80%; this recruitment may not be not restricted to cells active in DNA replication. Colocalizes with TRAIP to nuclear foci.</text>
</comment>
<comment type="tissue specificity">
    <text evidence="5">Ubiquitous.</text>
</comment>
<comment type="induction">
    <text evidence="5">Up-regulated in proliferating cultured fibroblasts.</text>
</comment>
<comment type="domain">
    <text evidence="1">The catalytic core consists of fingers, palm and thumb subdomains, but the fingers and thumb subdomains are much smaller than in high-fidelity polymerases; residues from five sequence motifs of the Y-family cluster around an active site cleft that can accommodate DNA and nucleotide substrates with relaxed geometric constraints, with consequently higher rates of misincorporation and low processivity.</text>
</comment>
<comment type="domain">
    <text evidence="1">The UBZ3-type zinc finger domain and the PIP-box mediate the interaction with ubiquitinated PCNA and are both necessary for the enzymatic activity in translesion synthesis.</text>
</comment>
<comment type="PTM">
    <text evidence="1">Monoubiquitinated by RCHY1/PIRH2. Ubiquitination depends on integrity of the UBZ3-type zinc finger domain and is enhanced by TRAIP. Ubiquitination inhibits the ability of PolH to interact with PCNA and to bypass UV-induced lesions.</text>
</comment>
<comment type="similarity">
    <text evidence="7">Belongs to the DNA polymerase type-Y family.</text>
</comment>
<evidence type="ECO:0000250" key="1">
    <source>
        <dbReference type="UniProtKB" id="Q9Y253"/>
    </source>
</evidence>
<evidence type="ECO:0000255" key="2">
    <source>
        <dbReference type="PROSITE-ProRule" id="PRU00216"/>
    </source>
</evidence>
<evidence type="ECO:0000255" key="3">
    <source>
        <dbReference type="PROSITE-ProRule" id="PRU01255"/>
    </source>
</evidence>
<evidence type="ECO:0000256" key="4">
    <source>
        <dbReference type="SAM" id="MobiDB-lite"/>
    </source>
</evidence>
<evidence type="ECO:0000269" key="5">
    <source>
    </source>
</evidence>
<evidence type="ECO:0000269" key="6">
    <source>
    </source>
</evidence>
<evidence type="ECO:0000305" key="7"/>
<proteinExistence type="evidence at protein level"/>